<evidence type="ECO:0000255" key="1">
    <source>
        <dbReference type="HAMAP-Rule" id="MF_00758"/>
    </source>
</evidence>
<comment type="similarity">
    <text evidence="1">Belongs to the UPF0301 (AlgH) family.</text>
</comment>
<name>Y917_RHIME</name>
<gene>
    <name type="ordered locus">R00917</name>
    <name type="ORF">SMc00019</name>
</gene>
<protein>
    <recommendedName>
        <fullName evidence="1">UPF0301 protein R00917</fullName>
    </recommendedName>
</protein>
<sequence length="201" mass="21979">MAKNVLHTIRERGFLDGQFLIAMPGMFDTNFARTVIFVCAHSEDGAMGFILNRPQRLTFPDVLLHLQLLDPDEAIRLPSATREFQIQAGGPVETGRGFVLHSDDYLSDSSIPVSDDICLTATLDIVRAISRGEGPLKATMLLGYAGWGPGQLEAEITQNGWLTCPAQEELIFSRDLDEKYDRALALMGVSPAMLSTDSGHA</sequence>
<feature type="chain" id="PRO_0000214341" description="UPF0301 protein R00917">
    <location>
        <begin position="1"/>
        <end position="201"/>
    </location>
</feature>
<reference key="1">
    <citation type="journal article" date="2001" name="Proc. Natl. Acad. Sci. U.S.A.">
        <title>Analysis of the chromosome sequence of the legume symbiont Sinorhizobium meliloti strain 1021.</title>
        <authorList>
            <person name="Capela D."/>
            <person name="Barloy-Hubler F."/>
            <person name="Gouzy J."/>
            <person name="Bothe G."/>
            <person name="Ampe F."/>
            <person name="Batut J."/>
            <person name="Boistard P."/>
            <person name="Becker A."/>
            <person name="Boutry M."/>
            <person name="Cadieu E."/>
            <person name="Dreano S."/>
            <person name="Gloux S."/>
            <person name="Godrie T."/>
            <person name="Goffeau A."/>
            <person name="Kahn D."/>
            <person name="Kiss E."/>
            <person name="Lelaure V."/>
            <person name="Masuy D."/>
            <person name="Pohl T."/>
            <person name="Portetelle D."/>
            <person name="Puehler A."/>
            <person name="Purnelle B."/>
            <person name="Ramsperger U."/>
            <person name="Renard C."/>
            <person name="Thebault P."/>
            <person name="Vandenbol M."/>
            <person name="Weidner S."/>
            <person name="Galibert F."/>
        </authorList>
    </citation>
    <scope>NUCLEOTIDE SEQUENCE [LARGE SCALE GENOMIC DNA]</scope>
    <source>
        <strain>1021</strain>
    </source>
</reference>
<reference key="2">
    <citation type="journal article" date="2001" name="Science">
        <title>The composite genome of the legume symbiont Sinorhizobium meliloti.</title>
        <authorList>
            <person name="Galibert F."/>
            <person name="Finan T.M."/>
            <person name="Long S.R."/>
            <person name="Puehler A."/>
            <person name="Abola P."/>
            <person name="Ampe F."/>
            <person name="Barloy-Hubler F."/>
            <person name="Barnett M.J."/>
            <person name="Becker A."/>
            <person name="Boistard P."/>
            <person name="Bothe G."/>
            <person name="Boutry M."/>
            <person name="Bowser L."/>
            <person name="Buhrmester J."/>
            <person name="Cadieu E."/>
            <person name="Capela D."/>
            <person name="Chain P."/>
            <person name="Cowie A."/>
            <person name="Davis R.W."/>
            <person name="Dreano S."/>
            <person name="Federspiel N.A."/>
            <person name="Fisher R.F."/>
            <person name="Gloux S."/>
            <person name="Godrie T."/>
            <person name="Goffeau A."/>
            <person name="Golding B."/>
            <person name="Gouzy J."/>
            <person name="Gurjal M."/>
            <person name="Hernandez-Lucas I."/>
            <person name="Hong A."/>
            <person name="Huizar L."/>
            <person name="Hyman R.W."/>
            <person name="Jones T."/>
            <person name="Kahn D."/>
            <person name="Kahn M.L."/>
            <person name="Kalman S."/>
            <person name="Keating D.H."/>
            <person name="Kiss E."/>
            <person name="Komp C."/>
            <person name="Lelaure V."/>
            <person name="Masuy D."/>
            <person name="Palm C."/>
            <person name="Peck M.C."/>
            <person name="Pohl T.M."/>
            <person name="Portetelle D."/>
            <person name="Purnelle B."/>
            <person name="Ramsperger U."/>
            <person name="Surzycki R."/>
            <person name="Thebault P."/>
            <person name="Vandenbol M."/>
            <person name="Vorhoelter F.J."/>
            <person name="Weidner S."/>
            <person name="Wells D.H."/>
            <person name="Wong K."/>
            <person name="Yeh K.-C."/>
            <person name="Batut J."/>
        </authorList>
    </citation>
    <scope>NUCLEOTIDE SEQUENCE [LARGE SCALE GENOMIC DNA]</scope>
    <source>
        <strain>1021</strain>
    </source>
</reference>
<organism>
    <name type="scientific">Rhizobium meliloti (strain 1021)</name>
    <name type="common">Ensifer meliloti</name>
    <name type="synonym">Sinorhizobium meliloti</name>
    <dbReference type="NCBI Taxonomy" id="266834"/>
    <lineage>
        <taxon>Bacteria</taxon>
        <taxon>Pseudomonadati</taxon>
        <taxon>Pseudomonadota</taxon>
        <taxon>Alphaproteobacteria</taxon>
        <taxon>Hyphomicrobiales</taxon>
        <taxon>Rhizobiaceae</taxon>
        <taxon>Sinorhizobium/Ensifer group</taxon>
        <taxon>Sinorhizobium</taxon>
    </lineage>
</organism>
<proteinExistence type="inferred from homology"/>
<accession>Q92RF8</accession>
<keyword id="KW-1185">Reference proteome</keyword>
<dbReference type="EMBL" id="AL591688">
    <property type="protein sequence ID" value="CAC45489.1"/>
    <property type="molecule type" value="Genomic_DNA"/>
</dbReference>
<dbReference type="RefSeq" id="NP_385023.1">
    <property type="nucleotide sequence ID" value="NC_003047.1"/>
</dbReference>
<dbReference type="RefSeq" id="WP_003532305.1">
    <property type="nucleotide sequence ID" value="NC_003047.1"/>
</dbReference>
<dbReference type="SMR" id="Q92RF8"/>
<dbReference type="EnsemblBacteria" id="CAC45489">
    <property type="protein sequence ID" value="CAC45489"/>
    <property type="gene ID" value="SMc00019"/>
</dbReference>
<dbReference type="KEGG" id="sme:SMc00019"/>
<dbReference type="PATRIC" id="fig|266834.11.peg.2315"/>
<dbReference type="eggNOG" id="COG1678">
    <property type="taxonomic scope" value="Bacteria"/>
</dbReference>
<dbReference type="HOGENOM" id="CLU_057596_1_0_5"/>
<dbReference type="OrthoDB" id="9807486at2"/>
<dbReference type="Proteomes" id="UP000001976">
    <property type="component" value="Chromosome"/>
</dbReference>
<dbReference type="GO" id="GO:0005829">
    <property type="term" value="C:cytosol"/>
    <property type="evidence" value="ECO:0007669"/>
    <property type="project" value="TreeGrafter"/>
</dbReference>
<dbReference type="Gene3D" id="3.40.1740.10">
    <property type="entry name" value="VC0467-like"/>
    <property type="match status" value="1"/>
</dbReference>
<dbReference type="HAMAP" id="MF_00758">
    <property type="entry name" value="UPF0301"/>
    <property type="match status" value="1"/>
</dbReference>
<dbReference type="InterPro" id="IPR003774">
    <property type="entry name" value="AlgH-like"/>
</dbReference>
<dbReference type="NCBIfam" id="NF001268">
    <property type="entry name" value="PRK00228.1-4"/>
    <property type="match status" value="1"/>
</dbReference>
<dbReference type="PANTHER" id="PTHR30327">
    <property type="entry name" value="UNCHARACTERIZED PROTEIN YQGE"/>
    <property type="match status" value="1"/>
</dbReference>
<dbReference type="PANTHER" id="PTHR30327:SF1">
    <property type="entry name" value="UPF0301 PROTEIN YQGE"/>
    <property type="match status" value="1"/>
</dbReference>
<dbReference type="Pfam" id="PF02622">
    <property type="entry name" value="DUF179"/>
    <property type="match status" value="1"/>
</dbReference>
<dbReference type="SUPFAM" id="SSF143456">
    <property type="entry name" value="VC0467-like"/>
    <property type="match status" value="1"/>
</dbReference>